<feature type="chain" id="PRO_0000126613" description="Small ribosomal subunit protein uS8">
    <location>
        <begin position="1"/>
        <end position="130"/>
    </location>
</feature>
<feature type="sequence variant">
    <original>L</original>
    <variation>V</variation>
    <location>
        <position position="11"/>
    </location>
</feature>
<feature type="sequence variant">
    <original>L</original>
    <variation>S</variation>
    <location>
        <position position="65"/>
    </location>
</feature>
<feature type="sequence variant">
    <original>C</original>
    <variation>S</variation>
    <location>
        <position position="72"/>
    </location>
</feature>
<sequence length="130" mass="14788">MVRISVLNDALKSMFNAEKRGKRQVMIRPSSKVIIKFLIVMQKHGYIGEFEYVDDHRSGKIVVELNGRLNKCGVISPRFDVGVKEIEGWTARLLPSRQFGYIVLTTSAGIMDHEEARRKNVGGKVLGFFY</sequence>
<keyword id="KW-0963">Cytoplasm</keyword>
<keyword id="KW-0687">Ribonucleoprotein</keyword>
<keyword id="KW-0689">Ribosomal protein</keyword>
<accession>Q00332</accession>
<accession>O04368</accession>
<comment type="subcellular location">
    <subcellularLocation>
        <location>Cytoplasm</location>
    </subcellularLocation>
</comment>
<comment type="similarity">
    <text evidence="1">Belongs to the universal ribosomal protein uS8 family.</text>
</comment>
<reference key="1">
    <citation type="journal article" date="1992" name="Plant Mol. Biol.">
        <title>Cytoplasmic ribosomal protein S15a from Brassica napus: molecular cloning and developmental expression in mitotically active tissues.</title>
        <authorList>
            <person name="Bonham-Smith P.C."/>
            <person name="Oancia T.L."/>
            <person name="Moloney M.M."/>
        </authorList>
    </citation>
    <scope>NUCLEOTIDE SEQUENCE [MRNA]</scope>
    <source>
        <strain>cv. Westar</strain>
        <tissue>Meristem</tissue>
    </source>
</reference>
<name>RS15A_BRANA</name>
<dbReference type="EMBL" id="X59983">
    <property type="protein sequence ID" value="CAA42599.1"/>
    <property type="molecule type" value="mRNA"/>
</dbReference>
<dbReference type="EMBL" id="X59984">
    <property type="protein sequence ID" value="CAA42600.1"/>
    <property type="molecule type" value="mRNA"/>
</dbReference>
<dbReference type="PIR" id="S20945">
    <property type="entry name" value="S20945"/>
</dbReference>
<dbReference type="RefSeq" id="XP_013681028.1">
    <property type="nucleotide sequence ID" value="XM_013825574.1"/>
</dbReference>
<dbReference type="RefSeq" id="XP_013707876.1">
    <property type="nucleotide sequence ID" value="XM_013852422.1"/>
</dbReference>
<dbReference type="RefSeq" id="XP_013708137.1">
    <property type="nucleotide sequence ID" value="XM_013852683.1"/>
</dbReference>
<dbReference type="RefSeq" id="XP_013708138.1">
    <property type="nucleotide sequence ID" value="XM_013852684.1"/>
</dbReference>
<dbReference type="RefSeq" id="XP_013715769.1">
    <property type="nucleotide sequence ID" value="XM_013860315.1"/>
</dbReference>
<dbReference type="SMR" id="Q00332"/>
<dbReference type="EnsemblPlants" id="CDX71071">
    <property type="protein sequence ID" value="CDX71071"/>
    <property type="gene ID" value="GSBRNA2T00141022001"/>
</dbReference>
<dbReference type="EnsemblPlants" id="CDX80221">
    <property type="protein sequence ID" value="CDX80221"/>
    <property type="gene ID" value="GSBRNA2T00133170001"/>
</dbReference>
<dbReference type="EnsemblPlants" id="CDX93628">
    <property type="protein sequence ID" value="CDX93628"/>
    <property type="gene ID" value="GSBRNA2T00156311001"/>
</dbReference>
<dbReference type="EnsemblPlants" id="CDX95134">
    <property type="protein sequence ID" value="CDX95134"/>
    <property type="gene ID" value="GSBRNA2T00100676001"/>
</dbReference>
<dbReference type="EnsemblPlants" id="CDY09247">
    <property type="protein sequence ID" value="CDY09247"/>
    <property type="gene ID" value="GSBRNA2T00001501001"/>
</dbReference>
<dbReference type="EnsemblPlants" id="CDY15625">
    <property type="protein sequence ID" value="CDY15625"/>
    <property type="gene ID" value="GSBRNA2T00089815001"/>
</dbReference>
<dbReference type="EnsemblPlants" id="CDY31589">
    <property type="protein sequence ID" value="CDY31589"/>
    <property type="gene ID" value="GSBRNA2T00047916001"/>
</dbReference>
<dbReference type="EnsemblPlants" id="CDY61304">
    <property type="protein sequence ID" value="CDY61304"/>
    <property type="gene ID" value="GSBRNA2T00033654001"/>
</dbReference>
<dbReference type="GeneID" id="106411630"/>
<dbReference type="Gramene" id="CDX71071">
    <property type="protein sequence ID" value="CDX71071"/>
    <property type="gene ID" value="GSBRNA2T00141022001"/>
</dbReference>
<dbReference type="Gramene" id="CDX80221">
    <property type="protein sequence ID" value="CDX80221"/>
    <property type="gene ID" value="GSBRNA2T00133170001"/>
</dbReference>
<dbReference type="Gramene" id="CDX93628">
    <property type="protein sequence ID" value="CDX93628"/>
    <property type="gene ID" value="GSBRNA2T00156311001"/>
</dbReference>
<dbReference type="Gramene" id="CDX95134">
    <property type="protein sequence ID" value="CDX95134"/>
    <property type="gene ID" value="GSBRNA2T00100676001"/>
</dbReference>
<dbReference type="Gramene" id="CDY09247">
    <property type="protein sequence ID" value="CDY09247"/>
    <property type="gene ID" value="GSBRNA2T00001501001"/>
</dbReference>
<dbReference type="Gramene" id="CDY15625">
    <property type="protein sequence ID" value="CDY15625"/>
    <property type="gene ID" value="GSBRNA2T00089815001"/>
</dbReference>
<dbReference type="Gramene" id="CDY31589">
    <property type="protein sequence ID" value="CDY31589"/>
    <property type="gene ID" value="GSBRNA2T00047916001"/>
</dbReference>
<dbReference type="Gramene" id="CDY61304">
    <property type="protein sequence ID" value="CDY61304"/>
    <property type="gene ID" value="GSBRNA2T00033654001"/>
</dbReference>
<dbReference type="KEGG" id="bna:106346392"/>
<dbReference type="KEGG" id="bna:106362258"/>
<dbReference type="KEGG" id="bna:106385644"/>
<dbReference type="KEGG" id="bna:106386853"/>
<dbReference type="KEGG" id="bna:106411630"/>
<dbReference type="KEGG" id="bna:106411828"/>
<dbReference type="KEGG" id="bna:106419513"/>
<dbReference type="OrthoDB" id="1031653at2759"/>
<dbReference type="GO" id="GO:0005737">
    <property type="term" value="C:cytoplasm"/>
    <property type="evidence" value="ECO:0007669"/>
    <property type="project" value="UniProtKB-SubCell"/>
</dbReference>
<dbReference type="GO" id="GO:1990904">
    <property type="term" value="C:ribonucleoprotein complex"/>
    <property type="evidence" value="ECO:0007669"/>
    <property type="project" value="UniProtKB-KW"/>
</dbReference>
<dbReference type="GO" id="GO:0005840">
    <property type="term" value="C:ribosome"/>
    <property type="evidence" value="ECO:0007669"/>
    <property type="project" value="UniProtKB-KW"/>
</dbReference>
<dbReference type="GO" id="GO:0003735">
    <property type="term" value="F:structural constituent of ribosome"/>
    <property type="evidence" value="ECO:0007669"/>
    <property type="project" value="InterPro"/>
</dbReference>
<dbReference type="GO" id="GO:0006412">
    <property type="term" value="P:translation"/>
    <property type="evidence" value="ECO:0007669"/>
    <property type="project" value="InterPro"/>
</dbReference>
<dbReference type="FunFam" id="3.30.1370.30:FF:000001">
    <property type="entry name" value="40S ribosomal protein S15a"/>
    <property type="match status" value="1"/>
</dbReference>
<dbReference type="FunFam" id="3.30.1490.10:FF:000002">
    <property type="entry name" value="40S ribosomal protein S15a"/>
    <property type="match status" value="1"/>
</dbReference>
<dbReference type="Gene3D" id="3.30.1370.30">
    <property type="match status" value="1"/>
</dbReference>
<dbReference type="Gene3D" id="3.30.1490.10">
    <property type="match status" value="1"/>
</dbReference>
<dbReference type="HAMAP" id="MF_01302_A">
    <property type="entry name" value="Ribosomal_uS8_A"/>
    <property type="match status" value="1"/>
</dbReference>
<dbReference type="InterPro" id="IPR000630">
    <property type="entry name" value="Ribosomal_uS8"/>
</dbReference>
<dbReference type="InterPro" id="IPR047863">
    <property type="entry name" value="Ribosomal_uS8_CS"/>
</dbReference>
<dbReference type="InterPro" id="IPR035987">
    <property type="entry name" value="Ribosomal_uS8_sf"/>
</dbReference>
<dbReference type="NCBIfam" id="NF003115">
    <property type="entry name" value="PRK04034.1"/>
    <property type="match status" value="1"/>
</dbReference>
<dbReference type="PANTHER" id="PTHR11758">
    <property type="entry name" value="40S RIBOSOMAL PROTEIN S15A"/>
    <property type="match status" value="1"/>
</dbReference>
<dbReference type="Pfam" id="PF00410">
    <property type="entry name" value="Ribosomal_S8"/>
    <property type="match status" value="1"/>
</dbReference>
<dbReference type="SUPFAM" id="SSF56047">
    <property type="entry name" value="Ribosomal protein S8"/>
    <property type="match status" value="1"/>
</dbReference>
<dbReference type="PROSITE" id="PS00053">
    <property type="entry name" value="RIBOSOMAL_S8"/>
    <property type="match status" value="1"/>
</dbReference>
<protein>
    <recommendedName>
        <fullName evidence="1">Small ribosomal subunit protein uS8</fullName>
    </recommendedName>
    <alternativeName>
        <fullName>40S ribosomal protein S15a</fullName>
    </alternativeName>
    <alternativeName>
        <fullName>PPCB8</fullName>
    </alternativeName>
</protein>
<evidence type="ECO:0000305" key="1"/>
<proteinExistence type="evidence at transcript level"/>
<gene>
    <name type="primary">RPS15A</name>
</gene>
<organism>
    <name type="scientific">Brassica napus</name>
    <name type="common">Rape</name>
    <dbReference type="NCBI Taxonomy" id="3708"/>
    <lineage>
        <taxon>Eukaryota</taxon>
        <taxon>Viridiplantae</taxon>
        <taxon>Streptophyta</taxon>
        <taxon>Embryophyta</taxon>
        <taxon>Tracheophyta</taxon>
        <taxon>Spermatophyta</taxon>
        <taxon>Magnoliopsida</taxon>
        <taxon>eudicotyledons</taxon>
        <taxon>Gunneridae</taxon>
        <taxon>Pentapetalae</taxon>
        <taxon>rosids</taxon>
        <taxon>malvids</taxon>
        <taxon>Brassicales</taxon>
        <taxon>Brassicaceae</taxon>
        <taxon>Brassiceae</taxon>
        <taxon>Brassica</taxon>
    </lineage>
</organism>